<organism>
    <name type="scientific">Sinorhizobium medicae (strain WSM419)</name>
    <name type="common">Ensifer medicae</name>
    <dbReference type="NCBI Taxonomy" id="366394"/>
    <lineage>
        <taxon>Bacteria</taxon>
        <taxon>Pseudomonadati</taxon>
        <taxon>Pseudomonadota</taxon>
        <taxon>Alphaproteobacteria</taxon>
        <taxon>Hyphomicrobiales</taxon>
        <taxon>Rhizobiaceae</taxon>
        <taxon>Sinorhizobium/Ensifer group</taxon>
        <taxon>Sinorhizobium</taxon>
    </lineage>
</organism>
<proteinExistence type="inferred from homology"/>
<feature type="chain" id="PRO_1000016039" description="Aspartyl/glutamyl-tRNA(Asn/Gln) amidotransferase subunit B">
    <location>
        <begin position="1"/>
        <end position="500"/>
    </location>
</feature>
<sequence>MSIVDVRTPDPKRFIPGATGDWEVIIGMEVHAQVLSNSKLFSGASTEFGSEPNANVSLVDAAMPGMLPVINEECVKQAVRTGLGLKAKINNRSIFDRKNYFYPDLPQGYQISQYKDPIVGEGKIIISVGPDRQGHFEDVEIGIERLHLEQDAGKSMHDQHPAMSYVDLNRSGVALMEIVSKPDLRSSDEAKAYLTKLRSILRYLGTCDGNMDEGSMRADVNVSVRRPGEAFGTRCEIKNVNSIRFVGQAIEYEARRQIAILEDGGAIDQETRLFDPGKGETRSMRSKEDAHDYRYFPDPDLLPLEFDDAFVEALKAHLPELPDDKKERFVRDLGLSVYDASVLVSEKAIADYFEAVAAGRDGKTAANWVINDLLGALNKAGKPIEGTPVSPAQLGGIIDLIKDGTISGKLAKDLFEIVWNEGGDPAQIVESRGMKQVTDTGAIEKAVDEIIAANPDQVEKAKAKPSLAGWFVGQVMKATGGKANPQAVQALVKSKLGFEE</sequence>
<evidence type="ECO:0000255" key="1">
    <source>
        <dbReference type="HAMAP-Rule" id="MF_00121"/>
    </source>
</evidence>
<keyword id="KW-0067">ATP-binding</keyword>
<keyword id="KW-0436">Ligase</keyword>
<keyword id="KW-0547">Nucleotide-binding</keyword>
<keyword id="KW-0648">Protein biosynthesis</keyword>
<dbReference type="EC" id="6.3.5.-" evidence="1"/>
<dbReference type="EMBL" id="CP000738">
    <property type="protein sequence ID" value="ABR59801.1"/>
    <property type="molecule type" value="Genomic_DNA"/>
</dbReference>
<dbReference type="RefSeq" id="WP_011975137.1">
    <property type="nucleotide sequence ID" value="NC_009636.1"/>
</dbReference>
<dbReference type="RefSeq" id="YP_001326636.1">
    <property type="nucleotide sequence ID" value="NC_009636.1"/>
</dbReference>
<dbReference type="SMR" id="A6U821"/>
<dbReference type="STRING" id="366394.Smed_0946"/>
<dbReference type="GeneID" id="61612219"/>
<dbReference type="KEGG" id="smd:Smed_0946"/>
<dbReference type="PATRIC" id="fig|366394.8.peg.4062"/>
<dbReference type="eggNOG" id="COG0064">
    <property type="taxonomic scope" value="Bacteria"/>
</dbReference>
<dbReference type="HOGENOM" id="CLU_019240_0_0_5"/>
<dbReference type="OrthoDB" id="9804078at2"/>
<dbReference type="Proteomes" id="UP000001108">
    <property type="component" value="Chromosome"/>
</dbReference>
<dbReference type="GO" id="GO:0050566">
    <property type="term" value="F:asparaginyl-tRNA synthase (glutamine-hydrolyzing) activity"/>
    <property type="evidence" value="ECO:0007669"/>
    <property type="project" value="RHEA"/>
</dbReference>
<dbReference type="GO" id="GO:0005524">
    <property type="term" value="F:ATP binding"/>
    <property type="evidence" value="ECO:0007669"/>
    <property type="project" value="UniProtKB-KW"/>
</dbReference>
<dbReference type="GO" id="GO:0050567">
    <property type="term" value="F:glutaminyl-tRNA synthase (glutamine-hydrolyzing) activity"/>
    <property type="evidence" value="ECO:0007669"/>
    <property type="project" value="UniProtKB-UniRule"/>
</dbReference>
<dbReference type="GO" id="GO:0070681">
    <property type="term" value="P:glutaminyl-tRNAGln biosynthesis via transamidation"/>
    <property type="evidence" value="ECO:0007669"/>
    <property type="project" value="TreeGrafter"/>
</dbReference>
<dbReference type="GO" id="GO:0006412">
    <property type="term" value="P:translation"/>
    <property type="evidence" value="ECO:0007669"/>
    <property type="project" value="UniProtKB-UniRule"/>
</dbReference>
<dbReference type="FunFam" id="1.10.10.410:FF:000001">
    <property type="entry name" value="Aspartyl/glutamyl-tRNA(Asn/Gln) amidotransferase subunit B"/>
    <property type="match status" value="1"/>
</dbReference>
<dbReference type="FunFam" id="1.10.150.380:FF:000001">
    <property type="entry name" value="Aspartyl/glutamyl-tRNA(Asn/Gln) amidotransferase subunit B"/>
    <property type="match status" value="1"/>
</dbReference>
<dbReference type="Gene3D" id="1.10.10.410">
    <property type="match status" value="1"/>
</dbReference>
<dbReference type="Gene3D" id="1.10.150.380">
    <property type="entry name" value="GatB domain, N-terminal subdomain"/>
    <property type="match status" value="1"/>
</dbReference>
<dbReference type="HAMAP" id="MF_00121">
    <property type="entry name" value="GatB"/>
    <property type="match status" value="1"/>
</dbReference>
<dbReference type="InterPro" id="IPR017959">
    <property type="entry name" value="Asn/Gln-tRNA_amidoTrfase_suB/E"/>
</dbReference>
<dbReference type="InterPro" id="IPR006075">
    <property type="entry name" value="Asn/Gln-tRNA_Trfase_suB/E_cat"/>
</dbReference>
<dbReference type="InterPro" id="IPR018027">
    <property type="entry name" value="Asn/Gln_amidotransferase"/>
</dbReference>
<dbReference type="InterPro" id="IPR003789">
    <property type="entry name" value="Asn/Gln_tRNA_amidoTrase-B-like"/>
</dbReference>
<dbReference type="InterPro" id="IPR004413">
    <property type="entry name" value="GatB"/>
</dbReference>
<dbReference type="InterPro" id="IPR042114">
    <property type="entry name" value="GatB_C_1"/>
</dbReference>
<dbReference type="InterPro" id="IPR023168">
    <property type="entry name" value="GatB_Yqey_C_2"/>
</dbReference>
<dbReference type="InterPro" id="IPR017958">
    <property type="entry name" value="Gln-tRNA_amidoTrfase_suB_CS"/>
</dbReference>
<dbReference type="InterPro" id="IPR014746">
    <property type="entry name" value="Gln_synth/guanido_kin_cat_dom"/>
</dbReference>
<dbReference type="NCBIfam" id="TIGR00133">
    <property type="entry name" value="gatB"/>
    <property type="match status" value="1"/>
</dbReference>
<dbReference type="NCBIfam" id="NF004012">
    <property type="entry name" value="PRK05477.1-2"/>
    <property type="match status" value="1"/>
</dbReference>
<dbReference type="NCBIfam" id="NF004014">
    <property type="entry name" value="PRK05477.1-4"/>
    <property type="match status" value="1"/>
</dbReference>
<dbReference type="NCBIfam" id="NF004015">
    <property type="entry name" value="PRK05477.1-5"/>
    <property type="match status" value="1"/>
</dbReference>
<dbReference type="PANTHER" id="PTHR11659">
    <property type="entry name" value="GLUTAMYL-TRNA GLN AMIDOTRANSFERASE SUBUNIT B MITOCHONDRIAL AND PROKARYOTIC PET112-RELATED"/>
    <property type="match status" value="1"/>
</dbReference>
<dbReference type="PANTHER" id="PTHR11659:SF0">
    <property type="entry name" value="GLUTAMYL-TRNA(GLN) AMIDOTRANSFERASE SUBUNIT B, MITOCHONDRIAL"/>
    <property type="match status" value="1"/>
</dbReference>
<dbReference type="Pfam" id="PF02934">
    <property type="entry name" value="GatB_N"/>
    <property type="match status" value="1"/>
</dbReference>
<dbReference type="Pfam" id="PF02637">
    <property type="entry name" value="GatB_Yqey"/>
    <property type="match status" value="1"/>
</dbReference>
<dbReference type="SMART" id="SM00845">
    <property type="entry name" value="GatB_Yqey"/>
    <property type="match status" value="1"/>
</dbReference>
<dbReference type="SUPFAM" id="SSF89095">
    <property type="entry name" value="GatB/YqeY motif"/>
    <property type="match status" value="1"/>
</dbReference>
<dbReference type="SUPFAM" id="SSF55931">
    <property type="entry name" value="Glutamine synthetase/guanido kinase"/>
    <property type="match status" value="1"/>
</dbReference>
<dbReference type="PROSITE" id="PS01234">
    <property type="entry name" value="GATB"/>
    <property type="match status" value="1"/>
</dbReference>
<accession>A6U821</accession>
<reference key="1">
    <citation type="submission" date="2007-06" db="EMBL/GenBank/DDBJ databases">
        <title>Complete sequence of Sinorhizobium medicae WSM419 chromosome.</title>
        <authorList>
            <consortium name="US DOE Joint Genome Institute"/>
            <person name="Copeland A."/>
            <person name="Lucas S."/>
            <person name="Lapidus A."/>
            <person name="Barry K."/>
            <person name="Glavina del Rio T."/>
            <person name="Dalin E."/>
            <person name="Tice H."/>
            <person name="Pitluck S."/>
            <person name="Chain P."/>
            <person name="Malfatti S."/>
            <person name="Shin M."/>
            <person name="Vergez L."/>
            <person name="Schmutz J."/>
            <person name="Larimer F."/>
            <person name="Land M."/>
            <person name="Hauser L."/>
            <person name="Kyrpides N."/>
            <person name="Mikhailova N."/>
            <person name="Reeve W.G."/>
            <person name="Richardson P."/>
        </authorList>
    </citation>
    <scope>NUCLEOTIDE SEQUENCE [LARGE SCALE GENOMIC DNA]</scope>
    <source>
        <strain>WSM419</strain>
    </source>
</reference>
<name>GATB_SINMW</name>
<comment type="function">
    <text evidence="1">Allows the formation of correctly charged Asn-tRNA(Asn) or Gln-tRNA(Gln) through the transamidation of misacylated Asp-tRNA(Asn) or Glu-tRNA(Gln) in organisms which lack either or both of asparaginyl-tRNA or glutaminyl-tRNA synthetases. The reaction takes place in the presence of glutamine and ATP through an activated phospho-Asp-tRNA(Asn) or phospho-Glu-tRNA(Gln).</text>
</comment>
<comment type="catalytic activity">
    <reaction evidence="1">
        <text>L-glutamyl-tRNA(Gln) + L-glutamine + ATP + H2O = L-glutaminyl-tRNA(Gln) + L-glutamate + ADP + phosphate + H(+)</text>
        <dbReference type="Rhea" id="RHEA:17521"/>
        <dbReference type="Rhea" id="RHEA-COMP:9681"/>
        <dbReference type="Rhea" id="RHEA-COMP:9684"/>
        <dbReference type="ChEBI" id="CHEBI:15377"/>
        <dbReference type="ChEBI" id="CHEBI:15378"/>
        <dbReference type="ChEBI" id="CHEBI:29985"/>
        <dbReference type="ChEBI" id="CHEBI:30616"/>
        <dbReference type="ChEBI" id="CHEBI:43474"/>
        <dbReference type="ChEBI" id="CHEBI:58359"/>
        <dbReference type="ChEBI" id="CHEBI:78520"/>
        <dbReference type="ChEBI" id="CHEBI:78521"/>
        <dbReference type="ChEBI" id="CHEBI:456216"/>
    </reaction>
</comment>
<comment type="catalytic activity">
    <reaction evidence="1">
        <text>L-aspartyl-tRNA(Asn) + L-glutamine + ATP + H2O = L-asparaginyl-tRNA(Asn) + L-glutamate + ADP + phosphate + 2 H(+)</text>
        <dbReference type="Rhea" id="RHEA:14513"/>
        <dbReference type="Rhea" id="RHEA-COMP:9674"/>
        <dbReference type="Rhea" id="RHEA-COMP:9677"/>
        <dbReference type="ChEBI" id="CHEBI:15377"/>
        <dbReference type="ChEBI" id="CHEBI:15378"/>
        <dbReference type="ChEBI" id="CHEBI:29985"/>
        <dbReference type="ChEBI" id="CHEBI:30616"/>
        <dbReference type="ChEBI" id="CHEBI:43474"/>
        <dbReference type="ChEBI" id="CHEBI:58359"/>
        <dbReference type="ChEBI" id="CHEBI:78515"/>
        <dbReference type="ChEBI" id="CHEBI:78516"/>
        <dbReference type="ChEBI" id="CHEBI:456216"/>
    </reaction>
</comment>
<comment type="subunit">
    <text evidence="1">Heterotrimer of A, B and C subunits.</text>
</comment>
<comment type="similarity">
    <text evidence="1">Belongs to the GatB/GatE family. GatB subfamily.</text>
</comment>
<gene>
    <name evidence="1" type="primary">gatB</name>
    <name type="ordered locus">Smed_0946</name>
</gene>
<protein>
    <recommendedName>
        <fullName evidence="1">Aspartyl/glutamyl-tRNA(Asn/Gln) amidotransferase subunit B</fullName>
        <shortName evidence="1">Asp/Glu-ADT subunit B</shortName>
        <ecNumber evidence="1">6.3.5.-</ecNumber>
    </recommendedName>
</protein>